<organism>
    <name type="scientific">Arabidopsis thaliana</name>
    <name type="common">Mouse-ear cress</name>
    <dbReference type="NCBI Taxonomy" id="3702"/>
    <lineage>
        <taxon>Eukaryota</taxon>
        <taxon>Viridiplantae</taxon>
        <taxon>Streptophyta</taxon>
        <taxon>Embryophyta</taxon>
        <taxon>Tracheophyta</taxon>
        <taxon>Spermatophyta</taxon>
        <taxon>Magnoliopsida</taxon>
        <taxon>eudicotyledons</taxon>
        <taxon>Gunneridae</taxon>
        <taxon>Pentapetalae</taxon>
        <taxon>rosids</taxon>
        <taxon>malvids</taxon>
        <taxon>Brassicales</taxon>
        <taxon>Brassicaceae</taxon>
        <taxon>Camelineae</taxon>
        <taxon>Arabidopsis</taxon>
    </lineage>
</organism>
<sequence length="560" mass="62929">MGFIVGVVIGLLVGIAIIIGFVKLENSRSKLRSELANTVAAFARMTVEDSRKLLPPEFYPSWVVFSERQKLTWLNHHLTKIWPYVDEAASELIKASVEPVLEQYRPAIVASLTFSKLTLGTVAPQFTGVSVIDGDKNGITLELDMQWDGNPNIVLGVKTLVGVSLPIQVKNIGFTGVFRLIFRPLVEDFPCFGAVSVSLREKKKLDFTLKVVGGDISAIPGLSEAIEETIRDAVEDSITWPVRKVIPIIPGDYSDLELKPVGMLEVKLVQAKNLTNKDLVGKSDPFAKMFIRPLREKTKRSKTINNDLNPIWNEHFEFVVEDASTQHLVVRIYDDEGVQASELIGCAQIRLCELEPGKVKDVWLKLVKDLEIQRDTKNRGEVHLELLYIPYGSGNGIVNPFVTSSMTSLERVLKNDTTDEENASSRKRKDVIVRGVLSVTVISAEEIPIQDLMGKADPYVVLSMKKSGAKSKTRVVNDSLNPVWNQTFDFVVEDGLHDMLVLEVWDHDTFGKDYIGRCILTLTRVIMEEEYKDWYPLDESKTGKLQLHLKWMAQSIYRDS</sequence>
<feature type="chain" id="PRO_0000419242" description="Synaptotagmin-5">
    <location>
        <begin position="1"/>
        <end position="560"/>
    </location>
</feature>
<feature type="transmembrane region" description="Helical" evidence="2">
    <location>
        <begin position="2"/>
        <end position="22"/>
    </location>
</feature>
<feature type="domain" description="SMP-LTD" evidence="4">
    <location>
        <begin position="67"/>
        <end position="249"/>
    </location>
</feature>
<feature type="domain" description="C2 1" evidence="3">
    <location>
        <begin position="243"/>
        <end position="364"/>
    </location>
</feature>
<feature type="domain" description="C2 2" evidence="3">
    <location>
        <begin position="417"/>
        <end position="535"/>
    </location>
</feature>
<feature type="region of interest" description="Phospholipid binding" evidence="1">
    <location>
        <begin position="227"/>
        <end position="523"/>
    </location>
</feature>
<feature type="binding site" evidence="1">
    <location>
        <position position="278"/>
    </location>
    <ligand>
        <name>Ca(2+)</name>
        <dbReference type="ChEBI" id="CHEBI:29108"/>
        <label>1</label>
    </ligand>
</feature>
<feature type="binding site" evidence="1">
    <location>
        <position position="284"/>
    </location>
    <ligand>
        <name>Ca(2+)</name>
        <dbReference type="ChEBI" id="CHEBI:29108"/>
        <label>1</label>
    </ligand>
</feature>
<feature type="binding site" evidence="1">
    <location>
        <position position="334"/>
    </location>
    <ligand>
        <name>Ca(2+)</name>
        <dbReference type="ChEBI" id="CHEBI:29108"/>
        <label>1</label>
    </ligand>
</feature>
<feature type="binding site" evidence="1">
    <location>
        <position position="336"/>
    </location>
    <ligand>
        <name>Ca(2+)</name>
        <dbReference type="ChEBI" id="CHEBI:29108"/>
        <label>1</label>
    </ligand>
</feature>
<feature type="binding site" evidence="3">
    <location>
        <position position="451"/>
    </location>
    <ligand>
        <name>Ca(2+)</name>
        <dbReference type="ChEBI" id="CHEBI:29108"/>
        <label>2</label>
    </ligand>
</feature>
<feature type="binding site" evidence="3">
    <location>
        <position position="451"/>
    </location>
    <ligand>
        <name>Ca(2+)</name>
        <dbReference type="ChEBI" id="CHEBI:29108"/>
        <label>3</label>
    </ligand>
</feature>
<feature type="binding site" evidence="3">
    <location>
        <position position="457"/>
    </location>
    <ligand>
        <name>Ca(2+)</name>
        <dbReference type="ChEBI" id="CHEBI:29108"/>
        <label>2</label>
    </ligand>
</feature>
<feature type="binding site" evidence="3">
    <location>
        <position position="506"/>
    </location>
    <ligand>
        <name>Ca(2+)</name>
        <dbReference type="ChEBI" id="CHEBI:29108"/>
        <label>2</label>
    </ligand>
</feature>
<feature type="binding site" evidence="3">
    <location>
        <position position="506"/>
    </location>
    <ligand>
        <name>Ca(2+)</name>
        <dbReference type="ChEBI" id="CHEBI:29108"/>
        <label>3</label>
    </ligand>
</feature>
<feature type="binding site" evidence="3">
    <location>
        <position position="508"/>
    </location>
    <ligand>
        <name>Ca(2+)</name>
        <dbReference type="ChEBI" id="CHEBI:29108"/>
        <label>2</label>
    </ligand>
</feature>
<feature type="binding site" evidence="3">
    <location>
        <position position="508"/>
    </location>
    <ligand>
        <name>Ca(2+)</name>
        <dbReference type="ChEBI" id="CHEBI:29108"/>
        <label>3</label>
    </ligand>
</feature>
<feature type="binding site" evidence="3">
    <location>
        <position position="513"/>
    </location>
    <ligand>
        <name>Ca(2+)</name>
        <dbReference type="ChEBI" id="CHEBI:29108"/>
        <label>3</label>
    </ligand>
</feature>
<dbReference type="EMBL" id="AC005106">
    <property type="protein sequence ID" value="AAF79726.1"/>
    <property type="status" value="ALT_SEQ"/>
    <property type="molecule type" value="Genomic_DNA"/>
</dbReference>
<dbReference type="EMBL" id="CP002684">
    <property type="protein sequence ID" value="AEE27846.1"/>
    <property type="molecule type" value="Genomic_DNA"/>
</dbReference>
<dbReference type="EMBL" id="AY140038">
    <property type="protein sequence ID" value="AAM98179.1"/>
    <property type="molecule type" value="mRNA"/>
</dbReference>
<dbReference type="EMBL" id="BT008907">
    <property type="protein sequence ID" value="AAP68346.1"/>
    <property type="molecule type" value="mRNA"/>
</dbReference>
<dbReference type="EMBL" id="AK228581">
    <property type="protein sequence ID" value="BAF00497.1"/>
    <property type="molecule type" value="mRNA"/>
</dbReference>
<dbReference type="SMR" id="Q8L706"/>
<dbReference type="BioGRID" id="22294">
    <property type="interactions" value="4"/>
</dbReference>
<dbReference type="FunCoup" id="Q8L706">
    <property type="interactions" value="3288"/>
</dbReference>
<dbReference type="IntAct" id="Q8L706">
    <property type="interactions" value="1"/>
</dbReference>
<dbReference type="STRING" id="3702.Q8L706"/>
<dbReference type="iPTMnet" id="Q8L706"/>
<dbReference type="PaxDb" id="3702-AT1G05500.1"/>
<dbReference type="ProteomicsDB" id="233030"/>
<dbReference type="EnsemblPlants" id="AT1G05500.1">
    <property type="protein sequence ID" value="AT1G05500.1"/>
    <property type="gene ID" value="AT1G05500"/>
</dbReference>
<dbReference type="GeneID" id="837052"/>
<dbReference type="Gramene" id="AT1G05500.1">
    <property type="protein sequence ID" value="AT1G05500.1"/>
    <property type="gene ID" value="AT1G05500"/>
</dbReference>
<dbReference type="KEGG" id="ath:AT1G05500"/>
<dbReference type="Araport" id="AT1G05500"/>
<dbReference type="TAIR" id="AT1G05500">
    <property type="gene designation" value="NTMC2T2.1"/>
</dbReference>
<dbReference type="eggNOG" id="KOG1012">
    <property type="taxonomic scope" value="Eukaryota"/>
</dbReference>
<dbReference type="HOGENOM" id="CLU_028927_1_0_1"/>
<dbReference type="InParanoid" id="Q8L706"/>
<dbReference type="PhylomeDB" id="Q8L706"/>
<dbReference type="PRO" id="PR:Q8L706"/>
<dbReference type="Proteomes" id="UP000006548">
    <property type="component" value="Chromosome 1"/>
</dbReference>
<dbReference type="ExpressionAtlas" id="Q8L706">
    <property type="expression patterns" value="baseline and differential"/>
</dbReference>
<dbReference type="GO" id="GO:0012505">
    <property type="term" value="C:endomembrane system"/>
    <property type="evidence" value="ECO:0000314"/>
    <property type="project" value="TAIR"/>
</dbReference>
<dbReference type="GO" id="GO:0005783">
    <property type="term" value="C:endoplasmic reticulum"/>
    <property type="evidence" value="ECO:0007005"/>
    <property type="project" value="TAIR"/>
</dbReference>
<dbReference type="GO" id="GO:0016020">
    <property type="term" value="C:membrane"/>
    <property type="evidence" value="ECO:0007669"/>
    <property type="project" value="UniProtKB-SubCell"/>
</dbReference>
<dbReference type="GO" id="GO:0033011">
    <property type="term" value="C:perinuclear theca"/>
    <property type="evidence" value="ECO:0000314"/>
    <property type="project" value="TAIR"/>
</dbReference>
<dbReference type="GO" id="GO:0009506">
    <property type="term" value="C:plasmodesma"/>
    <property type="evidence" value="ECO:0007005"/>
    <property type="project" value="TAIR"/>
</dbReference>
<dbReference type="GO" id="GO:0008289">
    <property type="term" value="F:lipid binding"/>
    <property type="evidence" value="ECO:0007669"/>
    <property type="project" value="UniProtKB-KW"/>
</dbReference>
<dbReference type="GO" id="GO:0046872">
    <property type="term" value="F:metal ion binding"/>
    <property type="evidence" value="ECO:0007669"/>
    <property type="project" value="UniProtKB-KW"/>
</dbReference>
<dbReference type="GO" id="GO:0006869">
    <property type="term" value="P:lipid transport"/>
    <property type="evidence" value="ECO:0007669"/>
    <property type="project" value="UniProtKB-KW"/>
</dbReference>
<dbReference type="CDD" id="cd00030">
    <property type="entry name" value="C2"/>
    <property type="match status" value="2"/>
</dbReference>
<dbReference type="CDD" id="cd21677">
    <property type="entry name" value="SMP_SYT"/>
    <property type="match status" value="1"/>
</dbReference>
<dbReference type="FunFam" id="2.60.40.150:FF:000100">
    <property type="entry name" value="Extended synaptotagmin-2"/>
    <property type="match status" value="1"/>
</dbReference>
<dbReference type="FunFam" id="2.60.40.150:FF:000135">
    <property type="entry name" value="Plant synaptotagmin"/>
    <property type="match status" value="1"/>
</dbReference>
<dbReference type="Gene3D" id="2.60.40.150">
    <property type="entry name" value="C2 domain"/>
    <property type="match status" value="2"/>
</dbReference>
<dbReference type="InterPro" id="IPR000008">
    <property type="entry name" value="C2_dom"/>
</dbReference>
<dbReference type="InterPro" id="IPR035892">
    <property type="entry name" value="C2_domain_sf"/>
</dbReference>
<dbReference type="InterPro" id="IPR031468">
    <property type="entry name" value="SMP_LBD"/>
</dbReference>
<dbReference type="InterPro" id="IPR045050">
    <property type="entry name" value="Synaptotagmin_plant"/>
</dbReference>
<dbReference type="InterPro" id="IPR039010">
    <property type="entry name" value="Synaptotagmin_SMP"/>
</dbReference>
<dbReference type="PANTHER" id="PTHR10774">
    <property type="entry name" value="EXTENDED SYNAPTOTAGMIN-RELATED"/>
    <property type="match status" value="1"/>
</dbReference>
<dbReference type="PANTHER" id="PTHR10774:SF149">
    <property type="entry name" value="SYNAPTOTAGMIN-5"/>
    <property type="match status" value="1"/>
</dbReference>
<dbReference type="Pfam" id="PF00168">
    <property type="entry name" value="C2"/>
    <property type="match status" value="2"/>
</dbReference>
<dbReference type="Pfam" id="PF17047">
    <property type="entry name" value="SMP_LBD"/>
    <property type="match status" value="1"/>
</dbReference>
<dbReference type="PRINTS" id="PR00360">
    <property type="entry name" value="C2DOMAIN"/>
</dbReference>
<dbReference type="SMART" id="SM00239">
    <property type="entry name" value="C2"/>
    <property type="match status" value="2"/>
</dbReference>
<dbReference type="SUPFAM" id="SSF49562">
    <property type="entry name" value="C2 domain (Calcium/lipid-binding domain, CaLB)"/>
    <property type="match status" value="2"/>
</dbReference>
<dbReference type="PROSITE" id="PS50004">
    <property type="entry name" value="C2"/>
    <property type="match status" value="2"/>
</dbReference>
<dbReference type="PROSITE" id="PS51847">
    <property type="entry name" value="SMP"/>
    <property type="match status" value="1"/>
</dbReference>
<protein>
    <recommendedName>
        <fullName>Synaptotagmin-5</fullName>
    </recommendedName>
    <alternativeName>
        <fullName>NTMC2T2.1</fullName>
    </alternativeName>
    <alternativeName>
        <fullName>Synaptotagmin E</fullName>
    </alternativeName>
</protein>
<name>SYT5_ARATH</name>
<keyword id="KW-0106">Calcium</keyword>
<keyword id="KW-0445">Lipid transport</keyword>
<keyword id="KW-0446">Lipid-binding</keyword>
<keyword id="KW-0472">Membrane</keyword>
<keyword id="KW-0479">Metal-binding</keyword>
<keyword id="KW-1185">Reference proteome</keyword>
<keyword id="KW-0677">Repeat</keyword>
<keyword id="KW-0812">Transmembrane</keyword>
<keyword id="KW-1133">Transmembrane helix</keyword>
<keyword id="KW-0813">Transport</keyword>
<accession>Q8L706</accession>
<accession>Q9ZVY8</accession>
<reference key="1">
    <citation type="journal article" date="2000" name="Nature">
        <title>Sequence and analysis of chromosome 1 of the plant Arabidopsis thaliana.</title>
        <authorList>
            <person name="Theologis A."/>
            <person name="Ecker J.R."/>
            <person name="Palm C.J."/>
            <person name="Federspiel N.A."/>
            <person name="Kaul S."/>
            <person name="White O."/>
            <person name="Alonso J."/>
            <person name="Altafi H."/>
            <person name="Araujo R."/>
            <person name="Bowman C.L."/>
            <person name="Brooks S.Y."/>
            <person name="Buehler E."/>
            <person name="Chan A."/>
            <person name="Chao Q."/>
            <person name="Chen H."/>
            <person name="Cheuk R.F."/>
            <person name="Chin C.W."/>
            <person name="Chung M.K."/>
            <person name="Conn L."/>
            <person name="Conway A.B."/>
            <person name="Conway A.R."/>
            <person name="Creasy T.H."/>
            <person name="Dewar K."/>
            <person name="Dunn P."/>
            <person name="Etgu P."/>
            <person name="Feldblyum T.V."/>
            <person name="Feng J.-D."/>
            <person name="Fong B."/>
            <person name="Fujii C.Y."/>
            <person name="Gill J.E."/>
            <person name="Goldsmith A.D."/>
            <person name="Haas B."/>
            <person name="Hansen N.F."/>
            <person name="Hughes B."/>
            <person name="Huizar L."/>
            <person name="Hunter J.L."/>
            <person name="Jenkins J."/>
            <person name="Johnson-Hopson C."/>
            <person name="Khan S."/>
            <person name="Khaykin E."/>
            <person name="Kim C.J."/>
            <person name="Koo H.L."/>
            <person name="Kremenetskaia I."/>
            <person name="Kurtz D.B."/>
            <person name="Kwan A."/>
            <person name="Lam B."/>
            <person name="Langin-Hooper S."/>
            <person name="Lee A."/>
            <person name="Lee J.M."/>
            <person name="Lenz C.A."/>
            <person name="Li J.H."/>
            <person name="Li Y.-P."/>
            <person name="Lin X."/>
            <person name="Liu S.X."/>
            <person name="Liu Z.A."/>
            <person name="Luros J.S."/>
            <person name="Maiti R."/>
            <person name="Marziali A."/>
            <person name="Militscher J."/>
            <person name="Miranda M."/>
            <person name="Nguyen M."/>
            <person name="Nierman W.C."/>
            <person name="Osborne B.I."/>
            <person name="Pai G."/>
            <person name="Peterson J."/>
            <person name="Pham P.K."/>
            <person name="Rizzo M."/>
            <person name="Rooney T."/>
            <person name="Rowley D."/>
            <person name="Sakano H."/>
            <person name="Salzberg S.L."/>
            <person name="Schwartz J.R."/>
            <person name="Shinn P."/>
            <person name="Southwick A.M."/>
            <person name="Sun H."/>
            <person name="Tallon L.J."/>
            <person name="Tambunga G."/>
            <person name="Toriumi M.J."/>
            <person name="Town C.D."/>
            <person name="Utterback T."/>
            <person name="Van Aken S."/>
            <person name="Vaysberg M."/>
            <person name="Vysotskaia V.S."/>
            <person name="Walker M."/>
            <person name="Wu D."/>
            <person name="Yu G."/>
            <person name="Fraser C.M."/>
            <person name="Venter J.C."/>
            <person name="Davis R.W."/>
        </authorList>
    </citation>
    <scope>NUCLEOTIDE SEQUENCE [LARGE SCALE GENOMIC DNA]</scope>
    <source>
        <strain>cv. Columbia</strain>
    </source>
</reference>
<reference key="2">
    <citation type="journal article" date="2017" name="Plant J.">
        <title>Araport11: a complete reannotation of the Arabidopsis thaliana reference genome.</title>
        <authorList>
            <person name="Cheng C.Y."/>
            <person name="Krishnakumar V."/>
            <person name="Chan A.P."/>
            <person name="Thibaud-Nissen F."/>
            <person name="Schobel S."/>
            <person name="Town C.D."/>
        </authorList>
    </citation>
    <scope>GENOME REANNOTATION</scope>
    <source>
        <strain>cv. Columbia</strain>
    </source>
</reference>
<reference key="3">
    <citation type="journal article" date="2003" name="Science">
        <title>Empirical analysis of transcriptional activity in the Arabidopsis genome.</title>
        <authorList>
            <person name="Yamada K."/>
            <person name="Lim J."/>
            <person name="Dale J.M."/>
            <person name="Chen H."/>
            <person name="Shinn P."/>
            <person name="Palm C.J."/>
            <person name="Southwick A.M."/>
            <person name="Wu H.C."/>
            <person name="Kim C.J."/>
            <person name="Nguyen M."/>
            <person name="Pham P.K."/>
            <person name="Cheuk R.F."/>
            <person name="Karlin-Newmann G."/>
            <person name="Liu S.X."/>
            <person name="Lam B."/>
            <person name="Sakano H."/>
            <person name="Wu T."/>
            <person name="Yu G."/>
            <person name="Miranda M."/>
            <person name="Quach H.L."/>
            <person name="Tripp M."/>
            <person name="Chang C.H."/>
            <person name="Lee J.M."/>
            <person name="Toriumi M.J."/>
            <person name="Chan M.M."/>
            <person name="Tang C.C."/>
            <person name="Onodera C.S."/>
            <person name="Deng J.M."/>
            <person name="Akiyama K."/>
            <person name="Ansari Y."/>
            <person name="Arakawa T."/>
            <person name="Banh J."/>
            <person name="Banno F."/>
            <person name="Bowser L."/>
            <person name="Brooks S.Y."/>
            <person name="Carninci P."/>
            <person name="Chao Q."/>
            <person name="Choy N."/>
            <person name="Enju A."/>
            <person name="Goldsmith A.D."/>
            <person name="Gurjal M."/>
            <person name="Hansen N.F."/>
            <person name="Hayashizaki Y."/>
            <person name="Johnson-Hopson C."/>
            <person name="Hsuan V.W."/>
            <person name="Iida K."/>
            <person name="Karnes M."/>
            <person name="Khan S."/>
            <person name="Koesema E."/>
            <person name="Ishida J."/>
            <person name="Jiang P.X."/>
            <person name="Jones T."/>
            <person name="Kawai J."/>
            <person name="Kamiya A."/>
            <person name="Meyers C."/>
            <person name="Nakajima M."/>
            <person name="Narusaka M."/>
            <person name="Seki M."/>
            <person name="Sakurai T."/>
            <person name="Satou M."/>
            <person name="Tamse R."/>
            <person name="Vaysberg M."/>
            <person name="Wallender E.K."/>
            <person name="Wong C."/>
            <person name="Yamamura Y."/>
            <person name="Yuan S."/>
            <person name="Shinozaki K."/>
            <person name="Davis R.W."/>
            <person name="Theologis A."/>
            <person name="Ecker J.R."/>
        </authorList>
    </citation>
    <scope>NUCLEOTIDE SEQUENCE [LARGE SCALE MRNA]</scope>
    <source>
        <strain>cv. Columbia</strain>
    </source>
</reference>
<reference key="4">
    <citation type="submission" date="2006-07" db="EMBL/GenBank/DDBJ databases">
        <title>Large-scale analysis of RIKEN Arabidopsis full-length (RAFL) cDNAs.</title>
        <authorList>
            <person name="Totoki Y."/>
            <person name="Seki M."/>
            <person name="Ishida J."/>
            <person name="Nakajima M."/>
            <person name="Enju A."/>
            <person name="Kamiya A."/>
            <person name="Narusaka M."/>
            <person name="Shin-i T."/>
            <person name="Nakagawa M."/>
            <person name="Sakamoto N."/>
            <person name="Oishi K."/>
            <person name="Kohara Y."/>
            <person name="Kobayashi M."/>
            <person name="Toyoda A."/>
            <person name="Sakaki Y."/>
            <person name="Sakurai T."/>
            <person name="Iida K."/>
            <person name="Akiyama K."/>
            <person name="Satou M."/>
            <person name="Toyoda T."/>
            <person name="Konagaya A."/>
            <person name="Carninci P."/>
            <person name="Kawai J."/>
            <person name="Hayashizaki Y."/>
            <person name="Shinozaki K."/>
        </authorList>
    </citation>
    <scope>NUCLEOTIDE SEQUENCE [LARGE SCALE MRNA]</scope>
    <source>
        <strain>cv. Columbia</strain>
    </source>
</reference>
<gene>
    <name type="primary">SYT5</name>
    <name type="synonym">SYTE</name>
    <name type="ordered locus">At1g05500</name>
    <name type="ORF">T25N20.15</name>
</gene>
<proteinExistence type="evidence at transcript level"/>
<evidence type="ECO:0000250" key="1"/>
<evidence type="ECO:0000255" key="2"/>
<evidence type="ECO:0000255" key="3">
    <source>
        <dbReference type="PROSITE-ProRule" id="PRU00041"/>
    </source>
</evidence>
<evidence type="ECO:0000255" key="4">
    <source>
        <dbReference type="PROSITE-ProRule" id="PRU01194"/>
    </source>
</evidence>
<evidence type="ECO:0000305" key="5"/>
<comment type="function">
    <text evidence="1">May be involved in membrane trafficking.</text>
</comment>
<comment type="cofactor">
    <cofactor evidence="3">
        <name>Ca(2+)</name>
        <dbReference type="ChEBI" id="CHEBI:29108"/>
    </cofactor>
</comment>
<comment type="subcellular location">
    <subcellularLocation>
        <location evidence="1">Membrane</location>
        <topology evidence="1">Single-pass membrane protein</topology>
    </subcellularLocation>
</comment>
<comment type="similarity">
    <text evidence="5">Belongs to the synaptotagmin family.</text>
</comment>
<comment type="sequence caution" evidence="5">
    <conflict type="erroneous gene model prediction">
        <sequence resource="EMBL-CDS" id="AAF79726"/>
    </conflict>
</comment>